<dbReference type="EMBL" id="CP000961">
    <property type="protein sequence ID" value="ACA86079.1"/>
    <property type="molecule type" value="Genomic_DNA"/>
</dbReference>
<dbReference type="RefSeq" id="WP_012324425.1">
    <property type="nucleotide sequence ID" value="NC_010506.1"/>
</dbReference>
<dbReference type="SMR" id="B1KNK2"/>
<dbReference type="STRING" id="392500.Swoo_1795"/>
<dbReference type="KEGG" id="swd:Swoo_1795"/>
<dbReference type="eggNOG" id="COG0353">
    <property type="taxonomic scope" value="Bacteria"/>
</dbReference>
<dbReference type="HOGENOM" id="CLU_060739_1_2_6"/>
<dbReference type="Proteomes" id="UP000002168">
    <property type="component" value="Chromosome"/>
</dbReference>
<dbReference type="GO" id="GO:0003677">
    <property type="term" value="F:DNA binding"/>
    <property type="evidence" value="ECO:0007669"/>
    <property type="project" value="UniProtKB-UniRule"/>
</dbReference>
<dbReference type="GO" id="GO:0008270">
    <property type="term" value="F:zinc ion binding"/>
    <property type="evidence" value="ECO:0007669"/>
    <property type="project" value="UniProtKB-KW"/>
</dbReference>
<dbReference type="GO" id="GO:0006310">
    <property type="term" value="P:DNA recombination"/>
    <property type="evidence" value="ECO:0007669"/>
    <property type="project" value="UniProtKB-UniRule"/>
</dbReference>
<dbReference type="GO" id="GO:0006281">
    <property type="term" value="P:DNA repair"/>
    <property type="evidence" value="ECO:0007669"/>
    <property type="project" value="UniProtKB-UniRule"/>
</dbReference>
<dbReference type="CDD" id="cd01025">
    <property type="entry name" value="TOPRIM_recR"/>
    <property type="match status" value="1"/>
</dbReference>
<dbReference type="FunFam" id="3.40.1360.10:FF:000001">
    <property type="entry name" value="Recombination protein RecR"/>
    <property type="match status" value="1"/>
</dbReference>
<dbReference type="Gene3D" id="3.40.1360.10">
    <property type="match status" value="1"/>
</dbReference>
<dbReference type="Gene3D" id="6.10.250.240">
    <property type="match status" value="1"/>
</dbReference>
<dbReference type="Gene3D" id="1.10.8.420">
    <property type="entry name" value="RecR Domain 1"/>
    <property type="match status" value="1"/>
</dbReference>
<dbReference type="HAMAP" id="MF_00017">
    <property type="entry name" value="RecR"/>
    <property type="match status" value="1"/>
</dbReference>
<dbReference type="InterPro" id="IPR000093">
    <property type="entry name" value="DNA_Rcmb_RecR"/>
</dbReference>
<dbReference type="InterPro" id="IPR023627">
    <property type="entry name" value="Rcmb_RecR"/>
</dbReference>
<dbReference type="InterPro" id="IPR015967">
    <property type="entry name" value="Rcmb_RecR_Znf"/>
</dbReference>
<dbReference type="InterPro" id="IPR006171">
    <property type="entry name" value="TOPRIM_dom"/>
</dbReference>
<dbReference type="InterPro" id="IPR034137">
    <property type="entry name" value="TOPRIM_RecR"/>
</dbReference>
<dbReference type="NCBIfam" id="TIGR00615">
    <property type="entry name" value="recR"/>
    <property type="match status" value="1"/>
</dbReference>
<dbReference type="PANTHER" id="PTHR30446">
    <property type="entry name" value="RECOMBINATION PROTEIN RECR"/>
    <property type="match status" value="1"/>
</dbReference>
<dbReference type="PANTHER" id="PTHR30446:SF0">
    <property type="entry name" value="RECOMBINATION PROTEIN RECR"/>
    <property type="match status" value="1"/>
</dbReference>
<dbReference type="Pfam" id="PF21175">
    <property type="entry name" value="RecR_C"/>
    <property type="match status" value="1"/>
</dbReference>
<dbReference type="Pfam" id="PF21176">
    <property type="entry name" value="RecR_HhH"/>
    <property type="match status" value="1"/>
</dbReference>
<dbReference type="Pfam" id="PF02132">
    <property type="entry name" value="RecR_ZnF"/>
    <property type="match status" value="1"/>
</dbReference>
<dbReference type="Pfam" id="PF13662">
    <property type="entry name" value="Toprim_4"/>
    <property type="match status" value="1"/>
</dbReference>
<dbReference type="SMART" id="SM00493">
    <property type="entry name" value="TOPRIM"/>
    <property type="match status" value="1"/>
</dbReference>
<dbReference type="SUPFAM" id="SSF111304">
    <property type="entry name" value="Recombination protein RecR"/>
    <property type="match status" value="1"/>
</dbReference>
<dbReference type="PROSITE" id="PS50880">
    <property type="entry name" value="TOPRIM"/>
    <property type="match status" value="1"/>
</dbReference>
<keyword id="KW-0227">DNA damage</keyword>
<keyword id="KW-0233">DNA recombination</keyword>
<keyword id="KW-0234">DNA repair</keyword>
<keyword id="KW-0479">Metal-binding</keyword>
<keyword id="KW-1185">Reference proteome</keyword>
<keyword id="KW-0862">Zinc</keyword>
<keyword id="KW-0863">Zinc-finger</keyword>
<reference key="1">
    <citation type="submission" date="2008-02" db="EMBL/GenBank/DDBJ databases">
        <title>Complete sequence of Shewanella woodyi ATCC 51908.</title>
        <authorList>
            <consortium name="US DOE Joint Genome Institute"/>
            <person name="Copeland A."/>
            <person name="Lucas S."/>
            <person name="Lapidus A."/>
            <person name="Glavina del Rio T."/>
            <person name="Dalin E."/>
            <person name="Tice H."/>
            <person name="Bruce D."/>
            <person name="Goodwin L."/>
            <person name="Pitluck S."/>
            <person name="Sims D."/>
            <person name="Brettin T."/>
            <person name="Detter J.C."/>
            <person name="Han C."/>
            <person name="Kuske C.R."/>
            <person name="Schmutz J."/>
            <person name="Larimer F."/>
            <person name="Land M."/>
            <person name="Hauser L."/>
            <person name="Kyrpides N."/>
            <person name="Lykidis A."/>
            <person name="Zhao J.-S."/>
            <person name="Richardson P."/>
        </authorList>
    </citation>
    <scope>NUCLEOTIDE SEQUENCE [LARGE SCALE GENOMIC DNA]</scope>
    <source>
        <strain>ATCC 51908 / MS32</strain>
    </source>
</reference>
<proteinExistence type="inferred from homology"/>
<protein>
    <recommendedName>
        <fullName evidence="1">Recombination protein RecR</fullName>
    </recommendedName>
</protein>
<gene>
    <name evidence="1" type="primary">recR</name>
    <name type="ordered locus">Swoo_1795</name>
</gene>
<accession>B1KNK2</accession>
<feature type="chain" id="PRO_1000089770" description="Recombination protein RecR">
    <location>
        <begin position="1"/>
        <end position="199"/>
    </location>
</feature>
<feature type="domain" description="Toprim" evidence="1">
    <location>
        <begin position="81"/>
        <end position="176"/>
    </location>
</feature>
<feature type="zinc finger region" description="C4-type" evidence="1">
    <location>
        <begin position="57"/>
        <end position="72"/>
    </location>
</feature>
<name>RECR_SHEWM</name>
<evidence type="ECO:0000255" key="1">
    <source>
        <dbReference type="HAMAP-Rule" id="MF_00017"/>
    </source>
</evidence>
<organism>
    <name type="scientific">Shewanella woodyi (strain ATCC 51908 / MS32)</name>
    <dbReference type="NCBI Taxonomy" id="392500"/>
    <lineage>
        <taxon>Bacteria</taxon>
        <taxon>Pseudomonadati</taxon>
        <taxon>Pseudomonadota</taxon>
        <taxon>Gammaproteobacteria</taxon>
        <taxon>Alteromonadales</taxon>
        <taxon>Shewanellaceae</taxon>
        <taxon>Shewanella</taxon>
    </lineage>
</organism>
<sequence length="199" mass="20964">MKFSPLVDELIQSLKCLPGVGPKSAQRMAFQLLERDRKAGQSLASALSSAMSDVGHCQACRTFTEETLCPICASHKRGNSEVICVVETPADVLAIEAGGHFSGRYFVLLGHLSPLDGVGPEELGLSLLEAHLASGEVSELILATNPTVEGDATAHFIADMAKGHQVSVSRIAHGVPVGGELEYVDSTTLALSFNGRLPL</sequence>
<comment type="function">
    <text evidence="1">May play a role in DNA repair. It seems to be involved in an RecBC-independent recombinational process of DNA repair. It may act with RecF and RecO.</text>
</comment>
<comment type="similarity">
    <text evidence="1">Belongs to the RecR family.</text>
</comment>